<gene>
    <name type="primary">parE</name>
</gene>
<organism>
    <name type="scientific">Streptomyces paromomycinus</name>
    <name type="common">Streptomyces rimosus subsp. paromomycinus</name>
    <dbReference type="NCBI Taxonomy" id="92743"/>
    <lineage>
        <taxon>Bacteria</taxon>
        <taxon>Bacillati</taxon>
        <taxon>Actinomycetota</taxon>
        <taxon>Actinomycetes</taxon>
        <taxon>Kitasatosporales</taxon>
        <taxon>Streptomycetaceae</taxon>
        <taxon>Streptomyces</taxon>
    </lineage>
</organism>
<sequence>MKALMFKAPLQAVLTERDVPEPAPGEALVKLAYNSICGSDLSFYKGVWHGFTYPVVPGHEWSGTVVEAGGGAADLVGQNVVGDLTVACGSCRHCTVGKPTLCADLQELGFTRDGACAEYMTVPTGNLHRLPEGLSLREATQVEPLAVALNAVDRLAVTAGEKVAITGAGGIGLLLAQAVRLRGAEVTVLAEPVTERRQAAHALGVPHTVGGDPGELVGFVEKHPELTPDVVLEASGYPLAVQEAVEAVRSGGRIGLIGYRIEEAATMAPHHIVVKVLSLQASMGPGDRFGEAIELLAAGAVDVDALLSHEFGLADHDRALDVALRRADGNTRSYFNLRA</sequence>
<dbReference type="EC" id="1.1.1.329"/>
<dbReference type="EMBL" id="AJ628955">
    <property type="protein sequence ID" value="CAF32372.1"/>
    <property type="molecule type" value="Genomic_DNA"/>
</dbReference>
<dbReference type="SMR" id="Q2MFP3"/>
<dbReference type="UniPathway" id="UPA00907">
    <property type="reaction ID" value="UER00923"/>
</dbReference>
<dbReference type="UniPathway" id="UPA00970"/>
<dbReference type="GO" id="GO:0016491">
    <property type="term" value="F:oxidoreductase activity"/>
    <property type="evidence" value="ECO:0007669"/>
    <property type="project" value="UniProtKB-KW"/>
</dbReference>
<dbReference type="GO" id="GO:0008270">
    <property type="term" value="F:zinc ion binding"/>
    <property type="evidence" value="ECO:0007669"/>
    <property type="project" value="InterPro"/>
</dbReference>
<dbReference type="Gene3D" id="3.90.180.10">
    <property type="entry name" value="Medium-chain alcohol dehydrogenases, catalytic domain"/>
    <property type="match status" value="1"/>
</dbReference>
<dbReference type="Gene3D" id="3.40.50.720">
    <property type="entry name" value="NAD(P)-binding Rossmann-like Domain"/>
    <property type="match status" value="1"/>
</dbReference>
<dbReference type="InterPro" id="IPR013149">
    <property type="entry name" value="ADH-like_C"/>
</dbReference>
<dbReference type="InterPro" id="IPR013154">
    <property type="entry name" value="ADH-like_N"/>
</dbReference>
<dbReference type="InterPro" id="IPR002328">
    <property type="entry name" value="ADH_Zn_CS"/>
</dbReference>
<dbReference type="InterPro" id="IPR011032">
    <property type="entry name" value="GroES-like_sf"/>
</dbReference>
<dbReference type="InterPro" id="IPR036291">
    <property type="entry name" value="NAD(P)-bd_dom_sf"/>
</dbReference>
<dbReference type="InterPro" id="IPR050129">
    <property type="entry name" value="Zn_alcohol_dh"/>
</dbReference>
<dbReference type="PANTHER" id="PTHR43401">
    <property type="entry name" value="L-THREONINE 3-DEHYDROGENASE"/>
    <property type="match status" value="1"/>
</dbReference>
<dbReference type="PANTHER" id="PTHR43401:SF2">
    <property type="entry name" value="L-THREONINE 3-DEHYDROGENASE"/>
    <property type="match status" value="1"/>
</dbReference>
<dbReference type="Pfam" id="PF08240">
    <property type="entry name" value="ADH_N"/>
    <property type="match status" value="1"/>
</dbReference>
<dbReference type="Pfam" id="PF00107">
    <property type="entry name" value="ADH_zinc_N"/>
    <property type="match status" value="1"/>
</dbReference>
<dbReference type="SUPFAM" id="SSF50129">
    <property type="entry name" value="GroES-like"/>
    <property type="match status" value="1"/>
</dbReference>
<dbReference type="SUPFAM" id="SSF51735">
    <property type="entry name" value="NAD(P)-binding Rossmann-fold domains"/>
    <property type="match status" value="1"/>
</dbReference>
<dbReference type="PROSITE" id="PS00059">
    <property type="entry name" value="ADH_ZINC"/>
    <property type="match status" value="1"/>
</dbReference>
<accession>Q2MFP3</accession>
<feature type="chain" id="PRO_0000234047" description="2-deoxy-scyllo-inosamine dehydrogenase">
    <location>
        <begin position="1"/>
        <end position="339"/>
    </location>
</feature>
<feature type="binding site" evidence="1">
    <location>
        <position position="37"/>
    </location>
    <ligand>
        <name>Zn(2+)</name>
        <dbReference type="ChEBI" id="CHEBI:29105"/>
        <label>1</label>
        <note>catalytic</note>
    </ligand>
</feature>
<feature type="binding site" evidence="1">
    <location>
        <position position="59"/>
    </location>
    <ligand>
        <name>Zn(2+)</name>
        <dbReference type="ChEBI" id="CHEBI:29105"/>
        <label>1</label>
        <note>catalytic</note>
    </ligand>
</feature>
<feature type="binding site" evidence="1">
    <location>
        <position position="88"/>
    </location>
    <ligand>
        <name>Zn(2+)</name>
        <dbReference type="ChEBI" id="CHEBI:29105"/>
        <label>2</label>
    </ligand>
</feature>
<feature type="binding site" evidence="1">
    <location>
        <position position="91"/>
    </location>
    <ligand>
        <name>Zn(2+)</name>
        <dbReference type="ChEBI" id="CHEBI:29105"/>
        <label>2</label>
    </ligand>
</feature>
<feature type="binding site" evidence="1">
    <location>
        <position position="94"/>
    </location>
    <ligand>
        <name>Zn(2+)</name>
        <dbReference type="ChEBI" id="CHEBI:29105"/>
        <label>2</label>
    </ligand>
</feature>
<feature type="binding site" evidence="1">
    <location>
        <position position="102"/>
    </location>
    <ligand>
        <name>Zn(2+)</name>
        <dbReference type="ChEBI" id="CHEBI:29105"/>
        <label>2</label>
    </ligand>
</feature>
<feature type="binding site" evidence="1">
    <location>
        <position position="143"/>
    </location>
    <ligand>
        <name>Zn(2+)</name>
        <dbReference type="ChEBI" id="CHEBI:29105"/>
        <label>1</label>
        <note>catalytic</note>
    </ligand>
</feature>
<protein>
    <recommendedName>
        <fullName>2-deoxy-scyllo-inosamine dehydrogenase</fullName>
        <shortName>DOIA dehydrogenase</shortName>
        <ecNumber>1.1.1.329</ecNumber>
    </recommendedName>
</protein>
<keyword id="KW-0479">Metal-binding</keyword>
<keyword id="KW-0520">NAD</keyword>
<keyword id="KW-0521">NADP</keyword>
<keyword id="KW-0560">Oxidoreductase</keyword>
<keyword id="KW-0862">Zinc</keyword>
<proteinExistence type="inferred from homology"/>
<name>DOIAD_STREY</name>
<comment type="function">
    <text evidence="1">Catalyzes the oxidation of 2-deoxy-scyllo-inosamine (DOIA) with NAD(+) or NADP(+), forming 3-amino-2,3-dideoxy-scyllo-inosose (amino-DOI).</text>
</comment>
<comment type="catalytic activity">
    <reaction>
        <text>2-deoxy-scyllo-inosamine + NADP(+) = 3-amino-2,3-dideoxy-scyllo-inosose + NADPH + H(+)</text>
        <dbReference type="Rhea" id="RHEA:33879"/>
        <dbReference type="ChEBI" id="CHEBI:15378"/>
        <dbReference type="ChEBI" id="CHEBI:57783"/>
        <dbReference type="ChEBI" id="CHEBI:58349"/>
        <dbReference type="ChEBI" id="CHEBI:65002"/>
        <dbReference type="ChEBI" id="CHEBI:65003"/>
        <dbReference type="EC" id="1.1.1.329"/>
    </reaction>
</comment>
<comment type="catalytic activity">
    <reaction>
        <text>2-deoxy-scyllo-inosamine + NAD(+) = 3-amino-2,3-dideoxy-scyllo-inosose + NADH + H(+)</text>
        <dbReference type="Rhea" id="RHEA:33883"/>
        <dbReference type="ChEBI" id="CHEBI:15378"/>
        <dbReference type="ChEBI" id="CHEBI:57540"/>
        <dbReference type="ChEBI" id="CHEBI:57945"/>
        <dbReference type="ChEBI" id="CHEBI:65002"/>
        <dbReference type="ChEBI" id="CHEBI:65003"/>
        <dbReference type="EC" id="1.1.1.329"/>
    </reaction>
</comment>
<comment type="cofactor">
    <cofactor evidence="1">
        <name>Zn(2+)</name>
        <dbReference type="ChEBI" id="CHEBI:29105"/>
    </cofactor>
    <text evidence="1">Binds 2 Zn(2+) ions per subunit.</text>
</comment>
<comment type="pathway">
    <text>Metabolic intermediate biosynthesis; 2-deoxystreptamine biosynthesis; 2-deoxystreptamine from D-glucose 6-phosphate: step 3/4.</text>
</comment>
<comment type="pathway">
    <text>Antibiotic biosynthesis; paromomycin biosynthesis.</text>
</comment>
<comment type="similarity">
    <text evidence="2">Belongs to the zinc-containing alcohol dehydrogenase family. DOIA dehydrogenase subfamily.</text>
</comment>
<evidence type="ECO:0000250" key="1"/>
<evidence type="ECO:0000305" key="2"/>
<reference key="1">
    <citation type="submission" date="2004-02" db="EMBL/GenBank/DDBJ databases">
        <title>Analysis and comparison of the biosynthetic gene clusters for the 2-deoxystreptamine-containing aminoglycoside antibiotics ribostamycin, neomycin, lividomycin, paromomycin and butirosin.</title>
        <authorList>
            <person name="Aboshanab K.M.A."/>
            <person name="Schmidt-Beissner H."/>
            <person name="Wehmeier U.F."/>
            <person name="Welzel K."/>
            <person name="Vente A."/>
            <person name="Piepersberg W."/>
        </authorList>
    </citation>
    <scope>NUCLEOTIDE SEQUENCE [GENOMIC DNA]</scope>
    <source>
        <strain>ATCC 14827 / DSM 41429 / JCM 4541 / KCC S-0541 / NBRC 15454 / NRRL 2455 / VKM Ac-605</strain>
    </source>
</reference>